<protein>
    <recommendedName>
        <fullName evidence="3">UDP-N-acetylglucosamine--peptide N-acetylglucosaminyltransferase GtfA subunit</fullName>
        <ecNumber evidence="3 7">2.4.1.-</ecNumber>
    </recommendedName>
    <alternativeName>
        <fullName evidence="3">Glycosyltransferase GtfA</fullName>
    </alternativeName>
    <alternativeName>
        <fullName evidence="8">O-glycosyltransferase</fullName>
    </alternativeName>
</protein>
<accession>Q9AET5</accession>
<keyword id="KW-0002">3D-structure</keyword>
<keyword id="KW-1003">Cell membrane</keyword>
<keyword id="KW-0963">Cytoplasm</keyword>
<keyword id="KW-0328">Glycosyltransferase</keyword>
<keyword id="KW-0472">Membrane</keyword>
<keyword id="KW-0547">Nucleotide-binding</keyword>
<keyword id="KW-0808">Transferase</keyword>
<name>GTFA_STRGN</name>
<dbReference type="EC" id="2.4.1.-" evidence="3 7"/>
<dbReference type="EMBL" id="AY028381">
    <property type="protein sequence ID" value="AAK17002.2"/>
    <property type="molecule type" value="Genomic_DNA"/>
</dbReference>
<dbReference type="PDB" id="5E9T">
    <property type="method" value="X-ray"/>
    <property type="resolution" value="2.92 A"/>
    <property type="chains" value="A/C=2-503"/>
</dbReference>
<dbReference type="PDB" id="5E9U">
    <property type="method" value="X-ray"/>
    <property type="resolution" value="3.84 A"/>
    <property type="chains" value="A/C/E/G=2-503"/>
</dbReference>
<dbReference type="PDBsum" id="5E9T"/>
<dbReference type="PDBsum" id="5E9U"/>
<dbReference type="SMR" id="Q9AET5"/>
<dbReference type="CAZy" id="GT4">
    <property type="family name" value="Glycosyltransferase Family 4"/>
</dbReference>
<dbReference type="UniPathway" id="UPA00378"/>
<dbReference type="EvolutionaryTrace" id="Q9AET5"/>
<dbReference type="GO" id="GO:0005737">
    <property type="term" value="C:cytoplasm"/>
    <property type="evidence" value="ECO:0007669"/>
    <property type="project" value="UniProtKB-SubCell"/>
</dbReference>
<dbReference type="GO" id="GO:0005886">
    <property type="term" value="C:plasma membrane"/>
    <property type="evidence" value="ECO:0007669"/>
    <property type="project" value="UniProtKB-SubCell"/>
</dbReference>
<dbReference type="GO" id="GO:0017122">
    <property type="term" value="C:protein N-acetylglucosaminyltransferase complex"/>
    <property type="evidence" value="ECO:0000314"/>
    <property type="project" value="UniProtKB"/>
</dbReference>
<dbReference type="GO" id="GO:0016757">
    <property type="term" value="F:glycosyltransferase activity"/>
    <property type="evidence" value="ECO:0000314"/>
    <property type="project" value="UniProtKB"/>
</dbReference>
<dbReference type="GO" id="GO:0000166">
    <property type="term" value="F:nucleotide binding"/>
    <property type="evidence" value="ECO:0007669"/>
    <property type="project" value="UniProtKB-KW"/>
</dbReference>
<dbReference type="GO" id="GO:0006493">
    <property type="term" value="P:protein O-linked glycosylation"/>
    <property type="evidence" value="ECO:0000314"/>
    <property type="project" value="UniProtKB"/>
</dbReference>
<dbReference type="GO" id="GO:0018242">
    <property type="term" value="P:protein O-linked glycosylation via serine"/>
    <property type="evidence" value="ECO:0007669"/>
    <property type="project" value="UniProtKB-UniRule"/>
</dbReference>
<dbReference type="CDD" id="cd04949">
    <property type="entry name" value="GT4_GtfA-like"/>
    <property type="match status" value="1"/>
</dbReference>
<dbReference type="FunFam" id="3.40.50.2000:FF:000196">
    <property type="entry name" value="UDP-N-acetylglucosamine--peptide N-acetylglucosaminyltransferase GtfA subunit"/>
    <property type="match status" value="1"/>
</dbReference>
<dbReference type="FunFam" id="3.40.50.2000:FF:000209">
    <property type="entry name" value="UDP-N-acetylglucosamine--peptide N-acetylglucosaminyltransferase GtfA subunit"/>
    <property type="match status" value="1"/>
</dbReference>
<dbReference type="Gene3D" id="3.40.50.2000">
    <property type="entry name" value="Glycogen Phosphorylase B"/>
    <property type="match status" value="2"/>
</dbReference>
<dbReference type="HAMAP" id="MF_01472">
    <property type="entry name" value="GtfA"/>
    <property type="match status" value="1"/>
</dbReference>
<dbReference type="InterPro" id="IPR001296">
    <property type="entry name" value="Glyco_trans_1"/>
</dbReference>
<dbReference type="InterPro" id="IPR014267">
    <property type="entry name" value="GtfA"/>
</dbReference>
<dbReference type="InterPro" id="IPR054396">
    <property type="entry name" value="GtfA_EBD"/>
</dbReference>
<dbReference type="NCBIfam" id="TIGR02918">
    <property type="entry name" value="accessory Sec system glycosyltransferase GtfA"/>
    <property type="match status" value="1"/>
</dbReference>
<dbReference type="PANTHER" id="PTHR12526">
    <property type="entry name" value="GLYCOSYLTRANSFERASE"/>
    <property type="match status" value="1"/>
</dbReference>
<dbReference type="PANTHER" id="PTHR12526:SF629">
    <property type="entry name" value="TEICHURONIC ACID BIOSYNTHESIS GLYCOSYLTRANSFERASE TUAH-RELATED"/>
    <property type="match status" value="1"/>
</dbReference>
<dbReference type="Pfam" id="PF00534">
    <property type="entry name" value="Glycos_transf_1"/>
    <property type="match status" value="1"/>
</dbReference>
<dbReference type="Pfam" id="PF22145">
    <property type="entry name" value="GtfA_EBD"/>
    <property type="match status" value="1"/>
</dbReference>
<dbReference type="SUPFAM" id="SSF53756">
    <property type="entry name" value="UDP-Glycosyltransferase/glycogen phosphorylase"/>
    <property type="match status" value="1"/>
</dbReference>
<sequence length="506" mass="58313">MTVYNINLGIGWASSGVEYAQAYRAQILRRIQQPAKFIFMDMILADNIQHLTENIGFLDEEIIWLYNYFTDIKIAPTTVTLDQVLAQVAGQPERSEKEGKIVRYFYPQDDQFITCYLRQEDQDSVEHVEYVSRGRLIRKDYFSYVRYASEYFAPHNDAATLYQRRFYHEDGSVAYDMLIEDGQEKLYRFPDRIFYSKAELVRYFLQCLQLQADDVVILDRETGIGQVVFEESQKAKLGVVVHAEHFSENASSDDYILWNNFYDYQFTNADKVDFFIVATEAQKRILEQQFQHYSDKQPQIATIPVGSLDQLTYPKEPRKPYSMITASRLATEKHIDWLVAATVQAHAQLPELTLDIYGKGSEEDKLRRRIEEAGAQDYIRLKGHADLSQIYAGYELYLTASTSEGFGLTLMEAVGSGLPLIGFDVRYGNQTFIDDGKNGYLLPVSSNHVEDQIIAAFVEKIIALFSQGRQQEMSQHSYQVAENYLTSRVEAAWTQLLKEVRDDSAL</sequence>
<reference key="1">
    <citation type="journal article" date="2002" name="Mol. Microbiol.">
        <title>An accessory sec locus of Streptococcus gordonii is required for export of the surface protein GspB and for normal levels of binding to human platelets.</title>
        <authorList>
            <person name="Bensing B.A."/>
            <person name="Sullam P.M."/>
        </authorList>
    </citation>
    <scope>NUCLEOTIDE SEQUENCE [GENOMIC DNA]</scope>
    <scope>DISRUPTION PHENOTYPE</scope>
    <source>
        <strain>M99</strain>
    </source>
</reference>
<reference key="2">
    <citation type="journal article" date="2004" name="Mol. Microbiol.">
        <title>Genes in the accessory sec locus of Streptococcus gordonii have three functionally distinct effects on the expression of the platelet-binding protein GspB.</title>
        <authorList>
            <person name="Takamatsu D."/>
            <person name="Bensing B.A."/>
            <person name="Sullam P.M."/>
        </authorList>
    </citation>
    <scope>DISRUPTION PHENOTYPE</scope>
    <source>
        <strain>M99</strain>
    </source>
</reference>
<reference key="3">
    <citation type="journal article" date="2004" name="J. Bacteriol.">
        <title>Four proteins encoded in the gspB-secY2A2 operon of Streptococcus gordonii mediate the intracellular glycosylation of the platelet-binding protein GspB.</title>
        <authorList>
            <person name="Takamatsu D."/>
            <person name="Bensing B.A."/>
            <person name="Sullam P.M."/>
        </authorList>
    </citation>
    <scope>FUNCTION</scope>
    <scope>PATHWAY</scope>
    <scope>DISRUPTION PHENOTYPE</scope>
    <source>
        <strain>M99</strain>
    </source>
</reference>
<reference evidence="12 13" key="4">
    <citation type="journal article" date="2016" name="Proc. Natl. Acad. Sci. U.S.A.">
        <title>Mechanism of a cytosolic O-glycosyltransferase essential for the synthesis of a bacterial adhesion protein.</title>
        <authorList>
            <person name="Chen Y."/>
            <person name="Seepersaud R."/>
            <person name="Bensing B.A."/>
            <person name="Sullam P.M."/>
            <person name="Rapoport T.A."/>
        </authorList>
    </citation>
    <scope>X-RAY CRYSTALLOGRAPHY (2.92 ANGSTROMS) OF 2-503 IN COMPLEX WITH GTFB; N-ACETYL-D-GLUCOSAMINE AND UDP</scope>
    <scope>FUNCTION</scope>
    <scope>SUBSTRATE SPECIFICITY</scope>
    <scope>POSSIBLE REACTION MECHANISM</scope>
    <scope>PATHWAY</scope>
    <scope>SUBUNIT</scope>
    <scope>DOMAIN</scope>
    <source>
        <strain>M99</strain>
    </source>
</reference>
<gene>
    <name evidence="3 8" type="primary">gtfA</name>
</gene>
<comment type="function">
    <text evidence="6 7">Required for polymorphic O-glycosylation of GspB, a serine-rich repeat cell wall protein encoded upstream in the same operon. Catalyzes the first step in glycosylation by transferring N-acetylglucosamine from UDP-GlcNAc to serine residues in GspB. Part of the accessory SecA2/SecY2 system specifically required to export GspB. Upon coexpression in E.coli with GtfB glycosylates GspB constructs. Glycosylation probably occurs intracellularly (PubMed:15489421). Requires GtfB for glycosylation activity, it has no activity alone. Does not use UDP-glucose as substrate. Has a fast, probably processive glycosylation phase followed by a slower, non-processive phase. The enzyme probably modifies its tertiary conformation by opening and closing its intersubunit interfaces to accomodate the increasingly glycosylated substrate; protein substrate recognition is provided by GtfB (PubMed:26884191).</text>
</comment>
<comment type="catalytic activity">
    <reaction evidence="1 2 3 11">
        <text>L-seryl-[protein] + UDP-N-acetyl-alpha-D-glucosamine = 3-O-[N-acetyl-alpha-D-glucosaminyl]-L-seryl-[protein] + UDP + H(+)</text>
        <dbReference type="Rhea" id="RHEA:59872"/>
        <dbReference type="Rhea" id="RHEA-COMP:9863"/>
        <dbReference type="Rhea" id="RHEA-COMP:15471"/>
        <dbReference type="ChEBI" id="CHEBI:15378"/>
        <dbReference type="ChEBI" id="CHEBI:29999"/>
        <dbReference type="ChEBI" id="CHEBI:57705"/>
        <dbReference type="ChEBI" id="CHEBI:58223"/>
        <dbReference type="ChEBI" id="CHEBI:143279"/>
    </reaction>
</comment>
<comment type="pathway">
    <text evidence="3 6 7">Protein modification; protein glycosylation.</text>
</comment>
<comment type="subunit">
    <text evidence="7 10 11">Forms a heterotetramer with 2 subunits each of GtfA and GtfB (PubMed:26884191). Part of the accessory SecA2/SecY2 protein translocation apparatus required to export cell wall protein GspB (Probable).</text>
</comment>
<comment type="subcellular location">
    <subcellularLocation>
        <location evidence="3">Cytoplasm</location>
    </subcellularLocation>
    <subcellularLocation>
        <location evidence="3">Cell membrane</location>
        <topology evidence="3">Peripheral membrane protein</topology>
    </subcellularLocation>
    <text evidence="3">Cell membrane association requires GtfB.</text>
</comment>
<comment type="domain">
    <text evidence="7">Has 2 Rossmann-like domains, called R-fold-1 and R-fold-2. R-fold-1 is interrupted by an extended beta-sheet domain that loops out of the structure. UDP and N-acetyl-D-glucosamine bind between the Rossman-like folds, which move closer together upon binding.</text>
</comment>
<comment type="disruption phenotype">
    <text evidence="4 5 6">Loss of export of cell wall protein GspB; transcription should not be affected. Non-glycosylated GspB may form aggregates.</text>
</comment>
<comment type="similarity">
    <text evidence="3 9">Belongs to the glycosyltransferase group 1 family. Glycosyltransferase 4 subfamily.</text>
</comment>
<evidence type="ECO:0000250" key="1">
    <source>
        <dbReference type="UniProtKB" id="A0A0H2URG7"/>
    </source>
</evidence>
<evidence type="ECO:0000250" key="2">
    <source>
        <dbReference type="UniProtKB" id="A0A0S4NM89"/>
    </source>
</evidence>
<evidence type="ECO:0000255" key="3">
    <source>
        <dbReference type="HAMAP-Rule" id="MF_01472"/>
    </source>
</evidence>
<evidence type="ECO:0000269" key="4">
    <source>
    </source>
</evidence>
<evidence type="ECO:0000269" key="5">
    <source>
    </source>
</evidence>
<evidence type="ECO:0000269" key="6">
    <source>
    </source>
</evidence>
<evidence type="ECO:0000269" key="7">
    <source>
    </source>
</evidence>
<evidence type="ECO:0000303" key="8">
    <source>
    </source>
</evidence>
<evidence type="ECO:0000305" key="9"/>
<evidence type="ECO:0000305" key="10">
    <source>
    </source>
</evidence>
<evidence type="ECO:0000305" key="11">
    <source>
    </source>
</evidence>
<evidence type="ECO:0007744" key="12">
    <source>
        <dbReference type="PDB" id="5E9T"/>
    </source>
</evidence>
<evidence type="ECO:0007744" key="13">
    <source>
        <dbReference type="PDB" id="5E9U"/>
    </source>
</evidence>
<evidence type="ECO:0007829" key="14">
    <source>
        <dbReference type="PDB" id="5E9T"/>
    </source>
</evidence>
<organism>
    <name type="scientific">Streptococcus gordonii</name>
    <dbReference type="NCBI Taxonomy" id="1302"/>
    <lineage>
        <taxon>Bacteria</taxon>
        <taxon>Bacillati</taxon>
        <taxon>Bacillota</taxon>
        <taxon>Bacilli</taxon>
        <taxon>Lactobacillales</taxon>
        <taxon>Streptococcaceae</taxon>
        <taxon>Streptococcus</taxon>
    </lineage>
</organism>
<feature type="chain" id="PRO_0000414593" description="UDP-N-acetylglucosamine--peptide N-acetylglucosaminyltransferase GtfA subunit">
    <location>
        <begin position="1"/>
        <end position="506"/>
    </location>
</feature>
<feature type="region of interest" description="N-terminus R-fold-1" evidence="11">
    <location>
        <begin position="1"/>
        <end position="78"/>
    </location>
</feature>
<feature type="region of interest" description="Extended beta-sheet domain" evidence="11">
    <location>
        <begin position="79"/>
        <end position="195"/>
    </location>
</feature>
<feature type="region of interest" description="C-terminus R-fold-1" evidence="11">
    <location>
        <begin position="196"/>
        <end position="306"/>
    </location>
</feature>
<feature type="region of interest" description="R-fold-2" evidence="11">
    <location>
        <begin position="307"/>
        <end position="506"/>
    </location>
</feature>
<feature type="binding site" evidence="3 13">
    <location>
        <begin position="16"/>
        <end position="19"/>
    </location>
    <ligand>
        <name>UDP</name>
        <dbReference type="ChEBI" id="CHEBI:58223"/>
    </ligand>
</feature>
<feature type="binding site" evidence="3 13">
    <location>
        <position position="242"/>
    </location>
    <ligand>
        <name>N-acetyl-D-glucosamine</name>
        <dbReference type="ChEBI" id="CHEBI:506227"/>
    </ligand>
</feature>
<feature type="binding site" evidence="13">
    <location>
        <position position="328"/>
    </location>
    <ligand>
        <name>UDP</name>
        <dbReference type="ChEBI" id="CHEBI:58223"/>
    </ligand>
</feature>
<feature type="binding site" evidence="13">
    <location>
        <position position="357"/>
    </location>
    <ligand>
        <name>UDP</name>
        <dbReference type="ChEBI" id="CHEBI:58223"/>
    </ligand>
</feature>
<feature type="binding site" evidence="13">
    <location>
        <begin position="383"/>
        <end position="385"/>
    </location>
    <ligand>
        <name>UDP</name>
        <dbReference type="ChEBI" id="CHEBI:58223"/>
    </ligand>
</feature>
<feature type="binding site" evidence="13">
    <location>
        <begin position="405"/>
        <end position="407"/>
    </location>
    <ligand>
        <name>N-acetyl-D-glucosamine</name>
        <dbReference type="ChEBI" id="CHEBI:506227"/>
    </ligand>
</feature>
<feature type="binding site" evidence="13">
    <location>
        <position position="409"/>
    </location>
    <ligand>
        <name>UDP</name>
        <dbReference type="ChEBI" id="CHEBI:58223"/>
    </ligand>
</feature>
<feature type="strand" evidence="14">
    <location>
        <begin position="3"/>
        <end position="7"/>
    </location>
</feature>
<feature type="helix" evidence="14">
    <location>
        <begin position="17"/>
        <end position="30"/>
    </location>
</feature>
<feature type="strand" evidence="14">
    <location>
        <begin position="35"/>
        <end position="39"/>
    </location>
</feature>
<feature type="helix" evidence="14">
    <location>
        <begin position="48"/>
        <end position="55"/>
    </location>
</feature>
<feature type="helix" evidence="14">
    <location>
        <begin position="59"/>
        <end position="61"/>
    </location>
</feature>
<feature type="strand" evidence="14">
    <location>
        <begin position="62"/>
        <end position="64"/>
    </location>
</feature>
<feature type="helix" evidence="14">
    <location>
        <begin position="65"/>
        <end position="68"/>
    </location>
</feature>
<feature type="helix" evidence="14">
    <location>
        <begin position="81"/>
        <end position="86"/>
    </location>
</feature>
<feature type="strand" evidence="14">
    <location>
        <begin position="88"/>
        <end position="90"/>
    </location>
</feature>
<feature type="strand" evidence="14">
    <location>
        <begin position="93"/>
        <end position="98"/>
    </location>
</feature>
<feature type="strand" evidence="14">
    <location>
        <begin position="101"/>
        <end position="106"/>
    </location>
</feature>
<feature type="turn" evidence="14">
    <location>
        <begin position="107"/>
        <end position="110"/>
    </location>
</feature>
<feature type="strand" evidence="14">
    <location>
        <begin position="111"/>
        <end position="119"/>
    </location>
</feature>
<feature type="strand" evidence="14">
    <location>
        <begin position="124"/>
        <end position="132"/>
    </location>
</feature>
<feature type="strand" evidence="14">
    <location>
        <begin position="135"/>
        <end position="155"/>
    </location>
</feature>
<feature type="strand" evidence="14">
    <location>
        <begin position="158"/>
        <end position="167"/>
    </location>
</feature>
<feature type="strand" evidence="14">
    <location>
        <begin position="171"/>
        <end position="180"/>
    </location>
</feature>
<feature type="strand" evidence="14">
    <location>
        <begin position="183"/>
        <end position="188"/>
    </location>
</feature>
<feature type="strand" evidence="14">
    <location>
        <begin position="193"/>
        <end position="196"/>
    </location>
</feature>
<feature type="helix" evidence="14">
    <location>
        <begin position="197"/>
        <end position="208"/>
    </location>
</feature>
<feature type="strand" evidence="14">
    <location>
        <begin position="215"/>
        <end position="219"/>
    </location>
</feature>
<feature type="turn" evidence="14">
    <location>
        <begin position="222"/>
        <end position="224"/>
    </location>
</feature>
<feature type="helix" evidence="14">
    <location>
        <begin position="225"/>
        <end position="232"/>
    </location>
</feature>
<feature type="strand" evidence="14">
    <location>
        <begin position="235"/>
        <end position="241"/>
    </location>
</feature>
<feature type="strand" evidence="14">
    <location>
        <begin position="246"/>
        <end position="248"/>
    </location>
</feature>
<feature type="helix" evidence="14">
    <location>
        <begin position="260"/>
        <end position="267"/>
    </location>
</feature>
<feature type="helix" evidence="14">
    <location>
        <begin position="269"/>
        <end position="271"/>
    </location>
</feature>
<feature type="strand" evidence="14">
    <location>
        <begin position="273"/>
        <end position="278"/>
    </location>
</feature>
<feature type="helix" evidence="14">
    <location>
        <begin position="280"/>
        <end position="293"/>
    </location>
</feature>
<feature type="strand" evidence="14">
    <location>
        <begin position="299"/>
        <end position="302"/>
    </location>
</feature>
<feature type="strand" evidence="14">
    <location>
        <begin position="308"/>
        <end position="310"/>
    </location>
</feature>
<feature type="strand" evidence="14">
    <location>
        <begin position="322"/>
        <end position="326"/>
    </location>
</feature>
<feature type="turn" evidence="14">
    <location>
        <begin position="331"/>
        <end position="333"/>
    </location>
</feature>
<feature type="helix" evidence="14">
    <location>
        <begin position="336"/>
        <end position="348"/>
    </location>
</feature>
<feature type="strand" evidence="14">
    <location>
        <begin position="353"/>
        <end position="357"/>
    </location>
</feature>
<feature type="helix" evidence="14">
    <location>
        <begin position="364"/>
        <end position="372"/>
    </location>
</feature>
<feature type="strand" evidence="14">
    <location>
        <begin position="379"/>
        <end position="381"/>
    </location>
</feature>
<feature type="turn" evidence="14">
    <location>
        <begin position="388"/>
        <end position="390"/>
    </location>
</feature>
<feature type="helix" evidence="14">
    <location>
        <begin position="391"/>
        <end position="393"/>
    </location>
</feature>
<feature type="strand" evidence="14">
    <location>
        <begin position="394"/>
        <end position="398"/>
    </location>
</feature>
<feature type="strand" evidence="14">
    <location>
        <begin position="404"/>
        <end position="406"/>
    </location>
</feature>
<feature type="helix" evidence="14">
    <location>
        <begin position="408"/>
        <end position="415"/>
    </location>
</feature>
<feature type="strand" evidence="14">
    <location>
        <begin position="420"/>
        <end position="424"/>
    </location>
</feature>
<feature type="helix" evidence="14">
    <location>
        <begin position="428"/>
        <end position="432"/>
    </location>
</feature>
<feature type="turn" evidence="14">
    <location>
        <begin position="435"/>
        <end position="437"/>
    </location>
</feature>
<feature type="strand" evidence="14">
    <location>
        <begin position="438"/>
        <end position="442"/>
    </location>
</feature>
<feature type="helix" evidence="14">
    <location>
        <begin position="451"/>
        <end position="462"/>
    </location>
</feature>
<feature type="turn" evidence="14">
    <location>
        <begin position="463"/>
        <end position="465"/>
    </location>
</feature>
<feature type="strand" evidence="14">
    <location>
        <begin position="466"/>
        <end position="468"/>
    </location>
</feature>
<feature type="turn" evidence="14">
    <location>
        <begin position="471"/>
        <end position="473"/>
    </location>
</feature>
<feature type="helix" evidence="14">
    <location>
        <begin position="474"/>
        <end position="481"/>
    </location>
</feature>
<feature type="helix" evidence="14">
    <location>
        <begin position="482"/>
        <end position="484"/>
    </location>
</feature>
<feature type="helix" evidence="14">
    <location>
        <begin position="486"/>
        <end position="500"/>
    </location>
</feature>
<proteinExistence type="evidence at protein level"/>